<keyword id="KW-0007">Acetylation</keyword>
<keyword id="KW-0903">Direct protein sequencing</keyword>
<keyword id="KW-0413">Isomerase</keyword>
<keyword id="KW-0496">Mitochondrion</keyword>
<keyword id="KW-0576">Peroxisome</keyword>
<keyword id="KW-1185">Reference proteome</keyword>
<sequence>MVLRGVRVVELAGLAPGPFCGMVLADFGAEVVRVNRLGSTGENFLARGKRSLALDLKRSQGVTVLRRMCARADVLLEPFRCGVMEKLQLGPETLLQDNPKLIYARLSGFGQSGIFSKVAGHDINYLALSGVLSKIGRSGENPYPPLNLLADFGGGGLMCTLGIVLALFERTRSGRGQVIDSSMVEGTAYLSSFLWKTQPMGLWKQPRGQNILDGGAPFYTTYKTADGEFMAVGAIEPQFYALLLKGLGLESEELPSQMSSADWPEMKKKFADVFAKKTKAEWCQIFDGTDACVTPVLTFEEALHHQHNRERASFITDGEQLPSPRPAPLLSRTPAVPSAKRDPSVGEHTVEVLREYGFSQEEILQLHSDRIVESDKLKANL</sequence>
<evidence type="ECO:0000250" key="1">
    <source>
        <dbReference type="UniProtKB" id="O06543"/>
    </source>
</evidence>
<evidence type="ECO:0000250" key="2">
    <source>
        <dbReference type="UniProtKB" id="Q9UHK6"/>
    </source>
</evidence>
<evidence type="ECO:0000256" key="3">
    <source>
        <dbReference type="SAM" id="MobiDB-lite"/>
    </source>
</evidence>
<evidence type="ECO:0000269" key="4">
    <source>
    </source>
</evidence>
<evidence type="ECO:0000305" key="5"/>
<evidence type="ECO:0007744" key="6">
    <source>
    </source>
</evidence>
<evidence type="ECO:0007744" key="7">
    <source>
    </source>
</evidence>
<name>AMACR_MOUSE</name>
<protein>
    <recommendedName>
        <fullName>Alpha-methylacyl-CoA racemase</fullName>
        <ecNumber evidence="2">5.1.99.4</ecNumber>
    </recommendedName>
    <alternativeName>
        <fullName evidence="2">2-methylacyl-CoA racemase</fullName>
    </alternativeName>
</protein>
<accession>O09174</accession>
<accession>Q543Q9</accession>
<accession>Q9DCW6</accession>
<comment type="function">
    <text evidence="2">Catalyzes the interconversion of (R)- and (S)-stereoisomers of alpha-methyl-branched-chain fatty acyl-CoA esters (By similarity). Acts only on coenzyme A thioesters, not on free fatty acids, and accepts as substrates a wide range of alpha-methylacyl-CoAs, including pristanoyl-CoA, trihydroxycoprostanoyl-CoA (an intermediate in bile acid synthesis), and arylpropionic acids like the anti-inflammatory drug ibuprofen (2-(4-isobutylphenyl)propionic acid) but neither 3-methyl-branched nor linear-chain acyl-CoAs (By similarity).</text>
</comment>
<comment type="catalytic activity">
    <reaction evidence="2">
        <text>a (2S)-2-methylacyl-CoA = a (2R)-2-methylacyl-CoA</text>
        <dbReference type="Rhea" id="RHEA:12657"/>
        <dbReference type="ChEBI" id="CHEBI:57313"/>
        <dbReference type="ChEBI" id="CHEBI:57314"/>
        <dbReference type="EC" id="5.1.99.4"/>
    </reaction>
    <physiologicalReaction direction="left-to-right" evidence="2">
        <dbReference type="Rhea" id="RHEA:12658"/>
    </physiologicalReaction>
    <physiologicalReaction direction="right-to-left" evidence="2">
        <dbReference type="Rhea" id="RHEA:12659"/>
    </physiologicalReaction>
</comment>
<comment type="catalytic activity">
    <reaction evidence="2">
        <text>(25R)-3alpha,7alpha,12alpha-trihydroxy-5beta-cholestan-26-oyl-CoA = (25S)-3alpha,7alpha,12alpha-trihydroxy-5beta-cholestan-26-oyl-CoA</text>
        <dbReference type="Rhea" id="RHEA:40455"/>
        <dbReference type="ChEBI" id="CHEBI:58677"/>
        <dbReference type="ChEBI" id="CHEBI:77251"/>
    </reaction>
    <physiologicalReaction direction="left-to-right" evidence="2">
        <dbReference type="Rhea" id="RHEA:40456"/>
    </physiologicalReaction>
    <physiologicalReaction direction="right-to-left" evidence="2">
        <dbReference type="Rhea" id="RHEA:40457"/>
    </physiologicalReaction>
</comment>
<comment type="catalytic activity">
    <reaction evidence="2">
        <text>(2R,6)-dimethylheptanoyl-CoA = (2S,6)-dimethylheptanoyl-CoA</text>
        <dbReference type="Rhea" id="RHEA:46732"/>
        <dbReference type="ChEBI" id="CHEBI:86982"/>
        <dbReference type="ChEBI" id="CHEBI:86983"/>
    </reaction>
    <physiologicalReaction direction="left-to-right" evidence="2">
        <dbReference type="Rhea" id="RHEA:46733"/>
    </physiologicalReaction>
</comment>
<comment type="pathway">
    <text>Lipid metabolism; bile acid biosynthesis.</text>
</comment>
<comment type="pathway">
    <text>Lipid metabolism; fatty acid metabolism.</text>
</comment>
<comment type="subunit">
    <text evidence="2">Monomer.</text>
</comment>
<comment type="subcellular location">
    <subcellularLocation>
        <location evidence="4">Peroxisome</location>
    </subcellularLocation>
    <subcellularLocation>
        <location evidence="4">Mitochondrion</location>
    </subcellularLocation>
</comment>
<comment type="similarity">
    <text evidence="5">Belongs to the CoA-transferase III family.</text>
</comment>
<comment type="sequence caution" evidence="5">
    <conflict type="erroneous initiation">
        <sequence resource="EMBL-CDS" id="AAB72146"/>
    </conflict>
    <text>Truncated N-terminus.</text>
</comment>
<gene>
    <name type="primary">Amacr</name>
    <name type="synonym">Macr1</name>
</gene>
<organism>
    <name type="scientific">Mus musculus</name>
    <name type="common">Mouse</name>
    <dbReference type="NCBI Taxonomy" id="10090"/>
    <lineage>
        <taxon>Eukaryota</taxon>
        <taxon>Metazoa</taxon>
        <taxon>Chordata</taxon>
        <taxon>Craniata</taxon>
        <taxon>Vertebrata</taxon>
        <taxon>Euteleostomi</taxon>
        <taxon>Mammalia</taxon>
        <taxon>Eutheria</taxon>
        <taxon>Euarchontoglires</taxon>
        <taxon>Glires</taxon>
        <taxon>Rodentia</taxon>
        <taxon>Myomorpha</taxon>
        <taxon>Muroidea</taxon>
        <taxon>Muridae</taxon>
        <taxon>Murinae</taxon>
        <taxon>Mus</taxon>
        <taxon>Mus</taxon>
    </lineage>
</organism>
<feature type="initiator methionine" description="Removed" evidence="4">
    <location>
        <position position="1"/>
    </location>
</feature>
<feature type="chain" id="PRO_0000194706" description="Alpha-methylacyl-CoA racemase">
    <location>
        <begin position="2"/>
        <end position="381"/>
    </location>
</feature>
<feature type="region of interest" description="Disordered" evidence="3">
    <location>
        <begin position="316"/>
        <end position="344"/>
    </location>
</feature>
<feature type="short sequence motif" description="Microbody targeting signal" evidence="2">
    <location>
        <begin position="379"/>
        <end position="381"/>
    </location>
</feature>
<feature type="active site" description="Proton acceptor" evidence="1">
    <location>
        <position position="121"/>
    </location>
</feature>
<feature type="active site" description="Proton donor" evidence="1">
    <location>
        <position position="151"/>
    </location>
</feature>
<feature type="binding site" evidence="1">
    <location>
        <position position="36"/>
    </location>
    <ligand>
        <name>substrate</name>
    </ligand>
</feature>
<feature type="binding site" evidence="1">
    <location>
        <begin position="54"/>
        <end position="57"/>
    </location>
    <ligand>
        <name>substrate</name>
    </ligand>
</feature>
<feature type="binding site" evidence="1">
    <location>
        <begin position="120"/>
        <end position="125"/>
    </location>
    <ligand>
        <name>substrate</name>
    </ligand>
</feature>
<feature type="modified residue" description="N6-acetyllysine" evidence="6">
    <location>
        <position position="57"/>
    </location>
</feature>
<feature type="modified residue" description="N6-acetyllysine; alternate" evidence="6">
    <location>
        <position position="86"/>
    </location>
</feature>
<feature type="modified residue" description="N6-succinyllysine; alternate" evidence="7">
    <location>
        <position position="86"/>
    </location>
</feature>
<feature type="modified residue" description="N6-acetyllysine; alternate" evidence="6">
    <location>
        <position position="100"/>
    </location>
</feature>
<feature type="modified residue" description="N6-succinyllysine; alternate" evidence="7">
    <location>
        <position position="100"/>
    </location>
</feature>
<feature type="modified residue" description="N6-acetyllysine" evidence="6">
    <location>
        <position position="117"/>
    </location>
</feature>
<feature type="modified residue" description="N6-succinyllysine" evidence="7">
    <location>
        <position position="267"/>
    </location>
</feature>
<feature type="sequence conflict" description="In Ref. 3; AAB72146." evidence="5" ref="3">
    <original>V</original>
    <variation>I</variation>
    <location>
        <position position="178"/>
    </location>
</feature>
<reference key="1">
    <citation type="journal article" date="2005" name="Science">
        <title>The transcriptional landscape of the mammalian genome.</title>
        <authorList>
            <person name="Carninci P."/>
            <person name="Kasukawa T."/>
            <person name="Katayama S."/>
            <person name="Gough J."/>
            <person name="Frith M.C."/>
            <person name="Maeda N."/>
            <person name="Oyama R."/>
            <person name="Ravasi T."/>
            <person name="Lenhard B."/>
            <person name="Wells C."/>
            <person name="Kodzius R."/>
            <person name="Shimokawa K."/>
            <person name="Bajic V.B."/>
            <person name="Brenner S.E."/>
            <person name="Batalov S."/>
            <person name="Forrest A.R."/>
            <person name="Zavolan M."/>
            <person name="Davis M.J."/>
            <person name="Wilming L.G."/>
            <person name="Aidinis V."/>
            <person name="Allen J.E."/>
            <person name="Ambesi-Impiombato A."/>
            <person name="Apweiler R."/>
            <person name="Aturaliya R.N."/>
            <person name="Bailey T.L."/>
            <person name="Bansal M."/>
            <person name="Baxter L."/>
            <person name="Beisel K.W."/>
            <person name="Bersano T."/>
            <person name="Bono H."/>
            <person name="Chalk A.M."/>
            <person name="Chiu K.P."/>
            <person name="Choudhary V."/>
            <person name="Christoffels A."/>
            <person name="Clutterbuck D.R."/>
            <person name="Crowe M.L."/>
            <person name="Dalla E."/>
            <person name="Dalrymple B.P."/>
            <person name="de Bono B."/>
            <person name="Della Gatta G."/>
            <person name="di Bernardo D."/>
            <person name="Down T."/>
            <person name="Engstrom P."/>
            <person name="Fagiolini M."/>
            <person name="Faulkner G."/>
            <person name="Fletcher C.F."/>
            <person name="Fukushima T."/>
            <person name="Furuno M."/>
            <person name="Futaki S."/>
            <person name="Gariboldi M."/>
            <person name="Georgii-Hemming P."/>
            <person name="Gingeras T.R."/>
            <person name="Gojobori T."/>
            <person name="Green R.E."/>
            <person name="Gustincich S."/>
            <person name="Harbers M."/>
            <person name="Hayashi Y."/>
            <person name="Hensch T.K."/>
            <person name="Hirokawa N."/>
            <person name="Hill D."/>
            <person name="Huminiecki L."/>
            <person name="Iacono M."/>
            <person name="Ikeo K."/>
            <person name="Iwama A."/>
            <person name="Ishikawa T."/>
            <person name="Jakt M."/>
            <person name="Kanapin A."/>
            <person name="Katoh M."/>
            <person name="Kawasawa Y."/>
            <person name="Kelso J."/>
            <person name="Kitamura H."/>
            <person name="Kitano H."/>
            <person name="Kollias G."/>
            <person name="Krishnan S.P."/>
            <person name="Kruger A."/>
            <person name="Kummerfeld S.K."/>
            <person name="Kurochkin I.V."/>
            <person name="Lareau L.F."/>
            <person name="Lazarevic D."/>
            <person name="Lipovich L."/>
            <person name="Liu J."/>
            <person name="Liuni S."/>
            <person name="McWilliam S."/>
            <person name="Madan Babu M."/>
            <person name="Madera M."/>
            <person name="Marchionni L."/>
            <person name="Matsuda H."/>
            <person name="Matsuzawa S."/>
            <person name="Miki H."/>
            <person name="Mignone F."/>
            <person name="Miyake S."/>
            <person name="Morris K."/>
            <person name="Mottagui-Tabar S."/>
            <person name="Mulder N."/>
            <person name="Nakano N."/>
            <person name="Nakauchi H."/>
            <person name="Ng P."/>
            <person name="Nilsson R."/>
            <person name="Nishiguchi S."/>
            <person name="Nishikawa S."/>
            <person name="Nori F."/>
            <person name="Ohara O."/>
            <person name="Okazaki Y."/>
            <person name="Orlando V."/>
            <person name="Pang K.C."/>
            <person name="Pavan W.J."/>
            <person name="Pavesi G."/>
            <person name="Pesole G."/>
            <person name="Petrovsky N."/>
            <person name="Piazza S."/>
            <person name="Reed J."/>
            <person name="Reid J.F."/>
            <person name="Ring B.Z."/>
            <person name="Ringwald M."/>
            <person name="Rost B."/>
            <person name="Ruan Y."/>
            <person name="Salzberg S.L."/>
            <person name="Sandelin A."/>
            <person name="Schneider C."/>
            <person name="Schoenbach C."/>
            <person name="Sekiguchi K."/>
            <person name="Semple C.A."/>
            <person name="Seno S."/>
            <person name="Sessa L."/>
            <person name="Sheng Y."/>
            <person name="Shibata Y."/>
            <person name="Shimada H."/>
            <person name="Shimada K."/>
            <person name="Silva D."/>
            <person name="Sinclair B."/>
            <person name="Sperling S."/>
            <person name="Stupka E."/>
            <person name="Sugiura K."/>
            <person name="Sultana R."/>
            <person name="Takenaka Y."/>
            <person name="Taki K."/>
            <person name="Tammoja K."/>
            <person name="Tan S.L."/>
            <person name="Tang S."/>
            <person name="Taylor M.S."/>
            <person name="Tegner J."/>
            <person name="Teichmann S.A."/>
            <person name="Ueda H.R."/>
            <person name="van Nimwegen E."/>
            <person name="Verardo R."/>
            <person name="Wei C.L."/>
            <person name="Yagi K."/>
            <person name="Yamanishi H."/>
            <person name="Zabarovsky E."/>
            <person name="Zhu S."/>
            <person name="Zimmer A."/>
            <person name="Hide W."/>
            <person name="Bult C."/>
            <person name="Grimmond S.M."/>
            <person name="Teasdale R.D."/>
            <person name="Liu E.T."/>
            <person name="Brusic V."/>
            <person name="Quackenbush J."/>
            <person name="Wahlestedt C."/>
            <person name="Mattick J.S."/>
            <person name="Hume D.A."/>
            <person name="Kai C."/>
            <person name="Sasaki D."/>
            <person name="Tomaru Y."/>
            <person name="Fukuda S."/>
            <person name="Kanamori-Katayama M."/>
            <person name="Suzuki M."/>
            <person name="Aoki J."/>
            <person name="Arakawa T."/>
            <person name="Iida J."/>
            <person name="Imamura K."/>
            <person name="Itoh M."/>
            <person name="Kato T."/>
            <person name="Kawaji H."/>
            <person name="Kawagashira N."/>
            <person name="Kawashima T."/>
            <person name="Kojima M."/>
            <person name="Kondo S."/>
            <person name="Konno H."/>
            <person name="Nakano K."/>
            <person name="Ninomiya N."/>
            <person name="Nishio T."/>
            <person name="Okada M."/>
            <person name="Plessy C."/>
            <person name="Shibata K."/>
            <person name="Shiraki T."/>
            <person name="Suzuki S."/>
            <person name="Tagami M."/>
            <person name="Waki K."/>
            <person name="Watahiki A."/>
            <person name="Okamura-Oho Y."/>
            <person name="Suzuki H."/>
            <person name="Kawai J."/>
            <person name="Hayashizaki Y."/>
        </authorList>
    </citation>
    <scope>NUCLEOTIDE SEQUENCE [LARGE SCALE MRNA]</scope>
    <source>
        <strain>C57BL/6J</strain>
        <tissue>Head</tissue>
        <tissue>Kidney</tissue>
    </source>
</reference>
<reference key="2">
    <citation type="journal article" date="2000" name="J. Biol. Chem.">
        <title>In mouse alpha-methylacyl-CoA racemase, the same gene product is simultaneously located in mitochondria and peroxisomes.</title>
        <authorList>
            <person name="Kotti T.J."/>
            <person name="Savolainen K."/>
            <person name="Helander H.M."/>
            <person name="Yagi A."/>
            <person name="Novikov D.K."/>
            <person name="Kalkkinen N."/>
            <person name="Conzelmann E."/>
            <person name="Hiltunen J.K."/>
            <person name="Schmitz W."/>
        </authorList>
    </citation>
    <scope>PROTEIN SEQUENCE OF 2-16</scope>
    <scope>PARTIAL NUCLEOTIDE SEQUENCE</scope>
    <scope>SUBCELLULAR LOCATION</scope>
</reference>
<reference key="3">
    <citation type="journal article" date="1997" name="Biochem. J.">
        <title>Molecular cloning of cDNA species for rat and mouse liver alpha-methylacyl-CoA racemases.</title>
        <authorList>
            <person name="Schmitz W."/>
            <person name="Helander H.M."/>
            <person name="Hiltunen J.K."/>
            <person name="Conzelmann E."/>
        </authorList>
    </citation>
    <scope>NUCLEOTIDE SEQUENCE [MRNA] OF 15-381</scope>
    <source>
        <tissue>Liver</tissue>
    </source>
</reference>
<reference key="4">
    <citation type="submission" date="2009-01" db="UniProtKB">
        <authorList>
            <person name="Lubec G."/>
            <person name="Sunyer B."/>
            <person name="Chen W.-Q."/>
        </authorList>
    </citation>
    <scope>PROTEIN SEQUENCE OF 51-57</scope>
    <scope>IDENTIFICATION BY MASS SPECTROMETRY</scope>
    <source>
        <strain>OF1</strain>
        <tissue>Hippocampus</tissue>
    </source>
</reference>
<reference key="5">
    <citation type="journal article" date="2010" name="Cell">
        <title>A tissue-specific atlas of mouse protein phosphorylation and expression.</title>
        <authorList>
            <person name="Huttlin E.L."/>
            <person name="Jedrychowski M.P."/>
            <person name="Elias J.E."/>
            <person name="Goswami T."/>
            <person name="Rad R."/>
            <person name="Beausoleil S.A."/>
            <person name="Villen J."/>
            <person name="Haas W."/>
            <person name="Sowa M.E."/>
            <person name="Gygi S.P."/>
        </authorList>
    </citation>
    <scope>IDENTIFICATION BY MASS SPECTROMETRY [LARGE SCALE ANALYSIS]</scope>
    <source>
        <tissue>Brain</tissue>
        <tissue>Brown adipose tissue</tissue>
        <tissue>Heart</tissue>
        <tissue>Kidney</tissue>
        <tissue>Liver</tissue>
        <tissue>Pancreas</tissue>
        <tissue>Testis</tissue>
    </source>
</reference>
<reference key="6">
    <citation type="journal article" date="2013" name="Mol. Cell">
        <title>SIRT5-mediated lysine desuccinylation impacts diverse metabolic pathways.</title>
        <authorList>
            <person name="Park J."/>
            <person name="Chen Y."/>
            <person name="Tishkoff D.X."/>
            <person name="Peng C."/>
            <person name="Tan M."/>
            <person name="Dai L."/>
            <person name="Xie Z."/>
            <person name="Zhang Y."/>
            <person name="Zwaans B.M."/>
            <person name="Skinner M.E."/>
            <person name="Lombard D.B."/>
            <person name="Zhao Y."/>
        </authorList>
    </citation>
    <scope>SUCCINYLATION [LARGE SCALE ANALYSIS] AT LYS-86; LYS-100 AND LYS-267</scope>
    <scope>IDENTIFICATION BY MASS SPECTROMETRY [LARGE SCALE ANALYSIS]</scope>
    <source>
        <tissue>Liver</tissue>
    </source>
</reference>
<reference key="7">
    <citation type="journal article" date="2013" name="Proc. Natl. Acad. Sci. U.S.A.">
        <title>Label-free quantitative proteomics of the lysine acetylome in mitochondria identifies substrates of SIRT3 in metabolic pathways.</title>
        <authorList>
            <person name="Rardin M.J."/>
            <person name="Newman J.C."/>
            <person name="Held J.M."/>
            <person name="Cusack M.P."/>
            <person name="Sorensen D.J."/>
            <person name="Li B."/>
            <person name="Schilling B."/>
            <person name="Mooney S.D."/>
            <person name="Kahn C.R."/>
            <person name="Verdin E."/>
            <person name="Gibson B.W."/>
        </authorList>
    </citation>
    <scope>ACETYLATION [LARGE SCALE ANALYSIS] AT LYS-57; LYS-86; LYS-100 AND LYS-117</scope>
    <scope>IDENTIFICATION BY MASS SPECTROMETRY [LARGE SCALE ANALYSIS]</scope>
    <source>
        <tissue>Liver</tissue>
    </source>
</reference>
<dbReference type="EC" id="5.1.99.4" evidence="2"/>
<dbReference type="EMBL" id="AK048249">
    <property type="protein sequence ID" value="BAC33284.1"/>
    <property type="molecule type" value="mRNA"/>
</dbReference>
<dbReference type="EMBL" id="AK002401">
    <property type="protein sequence ID" value="BAB22072.2"/>
    <property type="molecule type" value="mRNA"/>
</dbReference>
<dbReference type="EMBL" id="U89906">
    <property type="protein sequence ID" value="AAB72146.1"/>
    <property type="status" value="ALT_INIT"/>
    <property type="molecule type" value="mRNA"/>
</dbReference>
<dbReference type="CCDS" id="CCDS27381.1"/>
<dbReference type="RefSeq" id="NP_032563.2">
    <property type="nucleotide sequence ID" value="NM_008537.4"/>
</dbReference>
<dbReference type="SMR" id="O09174"/>
<dbReference type="FunCoup" id="O09174">
    <property type="interactions" value="1035"/>
</dbReference>
<dbReference type="STRING" id="10090.ENSMUSP00000066915"/>
<dbReference type="GlyGen" id="O09174">
    <property type="glycosylation" value="1 site, 1 O-linked glycan (1 site)"/>
</dbReference>
<dbReference type="iPTMnet" id="O09174"/>
<dbReference type="PhosphoSitePlus" id="O09174"/>
<dbReference type="SwissPalm" id="O09174"/>
<dbReference type="jPOST" id="O09174"/>
<dbReference type="PaxDb" id="10090-ENSMUSP00000066915"/>
<dbReference type="PeptideAtlas" id="O09174"/>
<dbReference type="ProteomicsDB" id="296226"/>
<dbReference type="Pumba" id="O09174"/>
<dbReference type="Antibodypedia" id="34888">
    <property type="antibodies" value="1109 antibodies from 44 providers"/>
</dbReference>
<dbReference type="DNASU" id="17117"/>
<dbReference type="Ensembl" id="ENSMUST00000070877.7">
    <property type="protein sequence ID" value="ENSMUSP00000066915.6"/>
    <property type="gene ID" value="ENSMUSG00000022244.8"/>
</dbReference>
<dbReference type="GeneID" id="17117"/>
<dbReference type="KEGG" id="mmu:17117"/>
<dbReference type="UCSC" id="uc007vgw.1">
    <property type="organism name" value="mouse"/>
</dbReference>
<dbReference type="AGR" id="MGI:1098273"/>
<dbReference type="CTD" id="23600"/>
<dbReference type="MGI" id="MGI:1098273">
    <property type="gene designation" value="Amacr"/>
</dbReference>
<dbReference type="VEuPathDB" id="HostDB:ENSMUSG00000022244"/>
<dbReference type="eggNOG" id="KOG3957">
    <property type="taxonomic scope" value="Eukaryota"/>
</dbReference>
<dbReference type="GeneTree" id="ENSGT00940000157215"/>
<dbReference type="HOGENOM" id="CLU_033975_5_0_1"/>
<dbReference type="InParanoid" id="O09174"/>
<dbReference type="OMA" id="VVIDPFR"/>
<dbReference type="OrthoDB" id="16747at2759"/>
<dbReference type="PhylomeDB" id="O09174"/>
<dbReference type="TreeFam" id="TF314188"/>
<dbReference type="BRENDA" id="5.1.99.4">
    <property type="organism ID" value="3474"/>
</dbReference>
<dbReference type="Reactome" id="R-MMU-193368">
    <property type="pathway name" value="Synthesis of bile acids and bile salts via 7alpha-hydroxycholesterol"/>
</dbReference>
<dbReference type="Reactome" id="R-MMU-193775">
    <property type="pathway name" value="Synthesis of bile acids and bile salts via 24-hydroxycholesterol"/>
</dbReference>
<dbReference type="Reactome" id="R-MMU-389887">
    <property type="pathway name" value="Beta-oxidation of pristanoyl-CoA"/>
</dbReference>
<dbReference type="Reactome" id="R-MMU-9033241">
    <property type="pathway name" value="Peroxisomal protein import"/>
</dbReference>
<dbReference type="UniPathway" id="UPA00199"/>
<dbReference type="UniPathway" id="UPA00221"/>
<dbReference type="BioGRID-ORCS" id="17117">
    <property type="hits" value="3 hits in 81 CRISPR screens"/>
</dbReference>
<dbReference type="PRO" id="PR:O09174"/>
<dbReference type="Proteomes" id="UP000000589">
    <property type="component" value="Chromosome 15"/>
</dbReference>
<dbReference type="RNAct" id="O09174">
    <property type="molecule type" value="protein"/>
</dbReference>
<dbReference type="Bgee" id="ENSMUSG00000022244">
    <property type="expression patterns" value="Expressed in right kidney and 256 other cell types or tissues"/>
</dbReference>
<dbReference type="GO" id="GO:0005739">
    <property type="term" value="C:mitochondrion"/>
    <property type="evidence" value="ECO:0007005"/>
    <property type="project" value="MGI"/>
</dbReference>
<dbReference type="GO" id="GO:0005777">
    <property type="term" value="C:peroxisome"/>
    <property type="evidence" value="ECO:0000250"/>
    <property type="project" value="UniProtKB"/>
</dbReference>
<dbReference type="GO" id="GO:0005886">
    <property type="term" value="C:plasma membrane"/>
    <property type="evidence" value="ECO:0007669"/>
    <property type="project" value="Ensembl"/>
</dbReference>
<dbReference type="GO" id="GO:0008111">
    <property type="term" value="F:alpha-methylacyl-CoA racemase activity"/>
    <property type="evidence" value="ECO:0000250"/>
    <property type="project" value="UniProtKB"/>
</dbReference>
<dbReference type="GO" id="GO:0006699">
    <property type="term" value="P:bile acid biosynthetic process"/>
    <property type="evidence" value="ECO:0007669"/>
    <property type="project" value="UniProtKB-UniPathway"/>
</dbReference>
<dbReference type="GO" id="GO:0006631">
    <property type="term" value="P:fatty acid metabolic process"/>
    <property type="evidence" value="ECO:0007669"/>
    <property type="project" value="UniProtKB-UniPathway"/>
</dbReference>
<dbReference type="GO" id="GO:0008300">
    <property type="term" value="P:isoprenoid catabolic process"/>
    <property type="evidence" value="ECO:0000304"/>
    <property type="project" value="MGI"/>
</dbReference>
<dbReference type="FunFam" id="3.30.1540.10:FF:000004">
    <property type="entry name" value="Probable alpha-methylacyl-CoA racemase mcr"/>
    <property type="match status" value="1"/>
</dbReference>
<dbReference type="FunFam" id="3.40.50.10540:FF:000004">
    <property type="entry name" value="Probable alpha-methylacyl-CoA racemase mcr"/>
    <property type="match status" value="1"/>
</dbReference>
<dbReference type="Gene3D" id="3.40.50.10540">
    <property type="entry name" value="Crotonobetainyl-coa:carnitine coa-transferase, domain 1"/>
    <property type="match status" value="1"/>
</dbReference>
<dbReference type="Gene3D" id="3.30.1540.10">
    <property type="entry name" value="formyl-coa transferase, domain 3"/>
    <property type="match status" value="1"/>
</dbReference>
<dbReference type="InterPro" id="IPR050509">
    <property type="entry name" value="CoA-transferase_III"/>
</dbReference>
<dbReference type="InterPro" id="IPR003673">
    <property type="entry name" value="CoA-Trfase_fam_III"/>
</dbReference>
<dbReference type="InterPro" id="IPR044855">
    <property type="entry name" value="CoA-Trfase_III_dom3_sf"/>
</dbReference>
<dbReference type="InterPro" id="IPR023606">
    <property type="entry name" value="CoA-Trfase_III_dom_1_sf"/>
</dbReference>
<dbReference type="PANTHER" id="PTHR48228:SF5">
    <property type="entry name" value="ALPHA-METHYLACYL-COA RACEMASE"/>
    <property type="match status" value="1"/>
</dbReference>
<dbReference type="PANTHER" id="PTHR48228">
    <property type="entry name" value="SUCCINYL-COA--D-CITRAMALATE COA-TRANSFERASE"/>
    <property type="match status" value="1"/>
</dbReference>
<dbReference type="Pfam" id="PF02515">
    <property type="entry name" value="CoA_transf_3"/>
    <property type="match status" value="1"/>
</dbReference>
<dbReference type="SUPFAM" id="SSF89796">
    <property type="entry name" value="CoA-transferase family III (CaiB/BaiF)"/>
    <property type="match status" value="1"/>
</dbReference>
<proteinExistence type="evidence at protein level"/>